<organism>
    <name type="scientific">Vaccinia virus (strain Copenhagen)</name>
    <name type="common">VACV</name>
    <dbReference type="NCBI Taxonomy" id="10249"/>
    <lineage>
        <taxon>Viruses</taxon>
        <taxon>Varidnaviria</taxon>
        <taxon>Bamfordvirae</taxon>
        <taxon>Nucleocytoviricota</taxon>
        <taxon>Pokkesviricetes</taxon>
        <taxon>Chitovirales</taxon>
        <taxon>Poxviridae</taxon>
        <taxon>Chordopoxvirinae</taxon>
        <taxon>Orthopoxvirus</taxon>
        <taxon>Vaccinia virus</taxon>
    </lineage>
</organism>
<accession>P20494</accession>
<name>VGF_VACCC</name>
<keyword id="KW-1015">Disulfide bond</keyword>
<keyword id="KW-0244">Early protein</keyword>
<keyword id="KW-0245">EGF-like domain</keyword>
<keyword id="KW-0325">Glycoprotein</keyword>
<keyword id="KW-0339">Growth factor</keyword>
<keyword id="KW-1043">Host membrane</keyword>
<keyword id="KW-0945">Host-virus interaction</keyword>
<keyword id="KW-0472">Membrane</keyword>
<keyword id="KW-1185">Reference proteome</keyword>
<keyword id="KW-0964">Secreted</keyword>
<keyword id="KW-0732">Signal</keyword>
<keyword id="KW-0812">Transmembrane</keyword>
<keyword id="KW-1133">Transmembrane helix</keyword>
<proteinExistence type="inferred from homology"/>
<reference key="1">
    <citation type="journal article" date="1990" name="Virology">
        <title>The complete DNA sequence of vaccinia virus.</title>
        <authorList>
            <person name="Goebel S.J."/>
            <person name="Johnson G.P."/>
            <person name="Perkus M.E."/>
            <person name="Davis S.W."/>
            <person name="Winslow J.P."/>
            <person name="Paoletti E."/>
        </authorList>
    </citation>
    <scope>NUCLEOTIDE SEQUENCE [LARGE SCALE GENOMIC DNA]</scope>
</reference>
<gene>
    <name type="primary">OPG019</name>
    <name type="ORF">C11R</name>
</gene>
<feature type="signal peptide" evidence="2">
    <location>
        <begin position="1"/>
        <end position="18"/>
    </location>
</feature>
<feature type="chain" id="PRO_0000007596" description="Pro-vaccinia growth factor">
    <location>
        <begin position="19"/>
        <end position="142"/>
    </location>
</feature>
<feature type="chain" id="PRO_0000412915" description="Vaccinia growth factor" evidence="2">
    <location>
        <begin position="19"/>
        <end position="96"/>
    </location>
</feature>
<feature type="topological domain" description="Extracellular" evidence="2">
    <location>
        <begin position="19"/>
        <end position="100"/>
    </location>
</feature>
<feature type="transmembrane region" description="Helical" evidence="2">
    <location>
        <begin position="101"/>
        <end position="121"/>
    </location>
</feature>
<feature type="topological domain" description="Cytoplasmic" evidence="2">
    <location>
        <begin position="122"/>
        <end position="142"/>
    </location>
</feature>
<feature type="domain" description="EGF-like" evidence="3">
    <location>
        <begin position="41"/>
        <end position="81"/>
    </location>
</feature>
<feature type="site" description="Cleavage (By host protease)" evidence="2">
    <location>
        <begin position="96"/>
        <end position="97"/>
    </location>
</feature>
<feature type="glycosylation site" description="N-linked (GlcNAc...) asparagine; by host" evidence="2">
    <location>
        <position position="34"/>
    </location>
</feature>
<feature type="glycosylation site" description="N-linked (GlcNAc...) asparagine; by host" evidence="2">
    <location>
        <position position="95"/>
    </location>
</feature>
<feature type="disulfide bond" evidence="3">
    <location>
        <begin position="45"/>
        <end position="58"/>
    </location>
</feature>
<feature type="disulfide bond" evidence="3">
    <location>
        <begin position="53"/>
        <end position="69"/>
    </location>
</feature>
<feature type="disulfide bond" evidence="3">
    <location>
        <begin position="71"/>
        <end position="80"/>
    </location>
</feature>
<protein>
    <recommendedName>
        <fullName>Pro-vaccinia growth factor</fullName>
        <shortName>Pro-VGF</shortName>
    </recommendedName>
    <component>
        <recommendedName>
            <fullName>Vaccinia growth factor</fullName>
            <shortName>VGF</shortName>
        </recommendedName>
        <alternativeName>
            <fullName>Secreted epidermal growth factor-like</fullName>
        </alternativeName>
    </component>
</protein>
<organismHost>
    <name type="scientific">Homo sapiens</name>
    <name type="common">Human</name>
    <dbReference type="NCBI Taxonomy" id="9606"/>
</organismHost>
<dbReference type="EMBL" id="M35027">
    <property type="protein sequence ID" value="AAA47985.1"/>
    <property type="molecule type" value="Genomic_DNA"/>
</dbReference>
<dbReference type="PIR" id="C42503">
    <property type="entry name" value="WMVZ3C"/>
</dbReference>
<dbReference type="SMR" id="P20494"/>
<dbReference type="GlyCosmos" id="P20494">
    <property type="glycosylation" value="2 sites, No reported glycans"/>
</dbReference>
<dbReference type="Proteomes" id="UP000008269">
    <property type="component" value="Segment"/>
</dbReference>
<dbReference type="GO" id="GO:0005615">
    <property type="term" value="C:extracellular space"/>
    <property type="evidence" value="ECO:0007669"/>
    <property type="project" value="TreeGrafter"/>
</dbReference>
<dbReference type="GO" id="GO:0033644">
    <property type="term" value="C:host cell membrane"/>
    <property type="evidence" value="ECO:0007669"/>
    <property type="project" value="UniProtKB-SubCell"/>
</dbReference>
<dbReference type="GO" id="GO:0016020">
    <property type="term" value="C:membrane"/>
    <property type="evidence" value="ECO:0007669"/>
    <property type="project" value="UniProtKB-KW"/>
</dbReference>
<dbReference type="GO" id="GO:0005154">
    <property type="term" value="F:epidermal growth factor receptor binding"/>
    <property type="evidence" value="ECO:0007669"/>
    <property type="project" value="InterPro"/>
</dbReference>
<dbReference type="GO" id="GO:0008083">
    <property type="term" value="F:growth factor activity"/>
    <property type="evidence" value="ECO:0007669"/>
    <property type="project" value="UniProtKB-KW"/>
</dbReference>
<dbReference type="GO" id="GO:0007173">
    <property type="term" value="P:epidermal growth factor receptor signaling pathway"/>
    <property type="evidence" value="ECO:0007669"/>
    <property type="project" value="TreeGrafter"/>
</dbReference>
<dbReference type="GO" id="GO:0008284">
    <property type="term" value="P:positive regulation of cell population proliferation"/>
    <property type="evidence" value="ECO:0007669"/>
    <property type="project" value="TreeGrafter"/>
</dbReference>
<dbReference type="GO" id="GO:0045840">
    <property type="term" value="P:positive regulation of mitotic nuclear division"/>
    <property type="evidence" value="ECO:0007669"/>
    <property type="project" value="TreeGrafter"/>
</dbReference>
<dbReference type="Gene3D" id="2.10.25.10">
    <property type="entry name" value="Laminin"/>
    <property type="match status" value="1"/>
</dbReference>
<dbReference type="InterPro" id="IPR000742">
    <property type="entry name" value="EGF-like_dom"/>
</dbReference>
<dbReference type="InterPro" id="IPR011170">
    <property type="entry name" value="GF_C11R"/>
</dbReference>
<dbReference type="PANTHER" id="PTHR10740:SF14">
    <property type="entry name" value="EGF-LIKE DOMAIN-CONTAINING PROTEIN"/>
    <property type="match status" value="1"/>
</dbReference>
<dbReference type="PANTHER" id="PTHR10740">
    <property type="entry name" value="TRANSFORMING GROWTH FACTOR ALPHA"/>
    <property type="match status" value="1"/>
</dbReference>
<dbReference type="PIRSF" id="PIRSF001779">
    <property type="entry name" value="GF_C11R"/>
    <property type="match status" value="1"/>
</dbReference>
<dbReference type="PRINTS" id="PR00009">
    <property type="entry name" value="EGFTGF"/>
</dbReference>
<dbReference type="SUPFAM" id="SSF57196">
    <property type="entry name" value="EGF/Laminin"/>
    <property type="match status" value="1"/>
</dbReference>
<dbReference type="PROSITE" id="PS00022">
    <property type="entry name" value="EGF_1"/>
    <property type="match status" value="1"/>
</dbReference>
<dbReference type="PROSITE" id="PS01186">
    <property type="entry name" value="EGF_2"/>
    <property type="match status" value="1"/>
</dbReference>
<dbReference type="PROSITE" id="PS50026">
    <property type="entry name" value="EGF_3"/>
    <property type="match status" value="1"/>
</dbReference>
<evidence type="ECO:0000250" key="1">
    <source>
        <dbReference type="UniProtKB" id="P01136"/>
    </source>
</evidence>
<evidence type="ECO:0000255" key="2"/>
<evidence type="ECO:0000255" key="3">
    <source>
        <dbReference type="PROSITE-ProRule" id="PRU00076"/>
    </source>
</evidence>
<evidence type="ECO:0000305" key="4"/>
<sequence length="142" mass="15777">MSMKYLMLLFAAMIIRSFADSGNAIETTLPEITNATTDIPAIRLCGPEGDGYCLHGDCIHARDIDGMYCRCSHGYTGIRCQHVVLVDYQRSENPNTTTSYIPSPGIMLVLVGIIIIITCCLLSVYRFTRRTNKLPLQDMVVP</sequence>
<comment type="function">
    <text evidence="1">Stimulates cellular proliferation (hyperplasia)and mobility around infected cells to promote rapid and efficient spread of infection. This effect is beneficial for virus replication in vivo, because poxviruses replicate possibly better in proliferating cells than in quiescent cells. Acts by binding host EGFR, inducing its dimerization, autophosphorylation and leading to activation of several cellular pathways regulating cell proliferation or cell survival. The activation by host EGFR of mitogen activated protein kinases (MAPK) and extracellular-signal regulated kinases (ERK) are essential for the positive effect of vaccinia growth factor on poxvirus virulence in vivo.</text>
</comment>
<comment type="subunit">
    <text evidence="1">Vaccinia growth factor interacts with host EGFR and promotes EGFR dimerization.</text>
</comment>
<comment type="subcellular location">
    <molecule>Pro-vaccinia growth factor</molecule>
    <subcellularLocation>
        <location evidence="1">Host membrane</location>
        <topology evidence="1">Single-pass type I membrane protein</topology>
    </subcellularLocation>
</comment>
<comment type="subcellular location">
    <molecule>Vaccinia growth factor</molecule>
    <subcellularLocation>
        <location evidence="1">Secreted</location>
    </subcellularLocation>
</comment>
<comment type="induction">
    <text evidence="1">Expressed in the early phase of the viral replicative cycle.</text>
</comment>
<comment type="similarity">
    <text evidence="4">Belongs to the orthopoxvirus OPG019 family.</text>
</comment>